<geneLocation type="plasmid">
    <name>pTiA6NC</name>
</geneLocation>
<comment type="miscellaneous">
    <text>The Ti plasmid contains at least six transcriptional units, designated vir loci, which are essential for efficient crown-gall tumorigenesis.</text>
</comment>
<comment type="sequence caution" evidence="2">
    <conflict type="erroneous initiation">
        <sequence resource="EMBL-CDS" id="AAA22116"/>
    </conflict>
</comment>
<feature type="chain" id="PRO_0000065863" description="Protein VirD3">
    <location>
        <begin position="1"/>
        <end position="201"/>
    </location>
</feature>
<feature type="region of interest" description="Disordered" evidence="1">
    <location>
        <begin position="28"/>
        <end position="51"/>
    </location>
</feature>
<feature type="region of interest" description="Disordered" evidence="1">
    <location>
        <begin position="139"/>
        <end position="171"/>
    </location>
</feature>
<feature type="compositionally biased region" description="Basic and acidic residues" evidence="1">
    <location>
        <begin position="141"/>
        <end position="161"/>
    </location>
</feature>
<accession>P09816</accession>
<dbReference type="EMBL" id="X06045">
    <property type="protein sequence ID" value="CAA29437.1"/>
    <property type="molecule type" value="Genomic_DNA"/>
</dbReference>
<dbReference type="EMBL" id="M17989">
    <property type="protein sequence ID" value="AAA22116.1"/>
    <property type="status" value="ALT_INIT"/>
    <property type="molecule type" value="Genomic_DNA"/>
</dbReference>
<dbReference type="PIR" id="D29826">
    <property type="entry name" value="D29826"/>
</dbReference>
<dbReference type="RefSeq" id="NP_059815.1">
    <property type="nucleotide sequence ID" value="NC_002377.1"/>
</dbReference>
<sequence length="201" mass="21407">MANGQFTIRSAGPASVGLTGERRGAASASSSALSNVQGDVRDRPIPTSSSRLPNAAILRDSSEIASTGLRYVAATLHWSEIAPLSLINKNDLAPAAYDFETRNDAGNVTAKVGRAVPVPKQGRLGKMLASVPLSTRISRVNSDRRLPTDAENHPETRDPRKGRGSHGVTPALHEKIGTAFVRRLRKIRTVLFAVAARLGAR</sequence>
<gene>
    <name type="primary">virD3</name>
</gene>
<organism>
    <name type="scientific">Rhizobium radiobacter</name>
    <name type="common">Agrobacterium tumefaciens</name>
    <name type="synonym">Agrobacterium radiobacter</name>
    <dbReference type="NCBI Taxonomy" id="358"/>
    <lineage>
        <taxon>Bacteria</taxon>
        <taxon>Pseudomonadati</taxon>
        <taxon>Pseudomonadota</taxon>
        <taxon>Alphaproteobacteria</taxon>
        <taxon>Hyphomicrobiales</taxon>
        <taxon>Rhizobiaceae</taxon>
        <taxon>Rhizobium/Agrobacterium group</taxon>
        <taxon>Agrobacterium</taxon>
        <taxon>Agrobacterium tumefaciens complex</taxon>
    </lineage>
</organism>
<proteinExistence type="predicted"/>
<keyword id="KW-0192">Crown gall tumor</keyword>
<keyword id="KW-0614">Plasmid</keyword>
<evidence type="ECO:0000256" key="1">
    <source>
        <dbReference type="SAM" id="MobiDB-lite"/>
    </source>
</evidence>
<evidence type="ECO:0000305" key="2"/>
<reference key="1">
    <citation type="journal article" date="1987" name="Nucleic Acids Res.">
        <title>Molecular characterization of the virD operon from Agrobacterium tumefaciens.</title>
        <authorList>
            <person name="Porter S.G."/>
            <person name="Yanofsky M.F."/>
            <person name="Nester E.W."/>
        </authorList>
    </citation>
    <scope>NUCLEOTIDE SEQUENCE [GENOMIC DNA]</scope>
</reference>
<reference key="2">
    <citation type="journal article" date="1987" name="J. Bacteriol.">
        <title>Double-stranded cleavage of T-DNA and generation of single-stranded T-DNA molecules in Escherichia coli by a virD-encoded border-specific endonuclease from Agrobacterium tumefaciens.</title>
        <authorList>
            <person name="Jayaswal R.K."/>
            <person name="Veluthambi K."/>
            <person name="Gelvin S.B."/>
            <person name="Slightom J.L."/>
        </authorList>
    </citation>
    <scope>NUCLEOTIDE SEQUENCE [GENOMIC DNA]</scope>
</reference>
<name>VIRD3_RHIRD</name>
<protein>
    <recommendedName>
        <fullName>Protein VirD3</fullName>
    </recommendedName>
</protein>